<sequence>MQRFIKWLAVITSLDLLIVLLGGALVTKTGSGQGCGKSWPLCNGEFVPSNLSMETIIELSHRLTSGSAGILVTLLCILSWKYYKHVRETKTLAILSFVFLVAQALMGAAAVVWGQMPAVLAIHFGISLISFASVILLTCLIFEIDQKFDARSLIMDKKMKFHIYGVTIYCYLVVYTGALVRHERASLACPDFPLCSKNRPMPTQLHEWVQMGHRLAAMLIFVWILYAMILAIRHYKQQPVVYWGWIISFILVTLQAIVGILVVFTNASLAMALLHSLFISCLFAVLCYLVMLGTRSKVNAKEAASTSKQTK</sequence>
<reference key="1">
    <citation type="journal article" date="2003" name="Nature">
        <title>The genome sequence of Bacillus anthracis Ames and comparison to closely related bacteria.</title>
        <authorList>
            <person name="Read T.D."/>
            <person name="Peterson S.N."/>
            <person name="Tourasse N.J."/>
            <person name="Baillie L.W."/>
            <person name="Paulsen I.T."/>
            <person name="Nelson K.E."/>
            <person name="Tettelin H."/>
            <person name="Fouts D.E."/>
            <person name="Eisen J.A."/>
            <person name="Gill S.R."/>
            <person name="Holtzapple E.K."/>
            <person name="Okstad O.A."/>
            <person name="Helgason E."/>
            <person name="Rilstone J."/>
            <person name="Wu M."/>
            <person name="Kolonay J.F."/>
            <person name="Beanan M.J."/>
            <person name="Dodson R.J."/>
            <person name="Brinkac L.M."/>
            <person name="Gwinn M.L."/>
            <person name="DeBoy R.T."/>
            <person name="Madpu R."/>
            <person name="Daugherty S.C."/>
            <person name="Durkin A.S."/>
            <person name="Haft D.H."/>
            <person name="Nelson W.C."/>
            <person name="Peterson J.D."/>
            <person name="Pop M."/>
            <person name="Khouri H.M."/>
            <person name="Radune D."/>
            <person name="Benton J.L."/>
            <person name="Mahamoud Y."/>
            <person name="Jiang L."/>
            <person name="Hance I.R."/>
            <person name="Weidman J.F."/>
            <person name="Berry K.J."/>
            <person name="Plaut R.D."/>
            <person name="Wolf A.M."/>
            <person name="Watkins K.L."/>
            <person name="Nierman W.C."/>
            <person name="Hazen A."/>
            <person name="Cline R.T."/>
            <person name="Redmond C."/>
            <person name="Thwaite J.E."/>
            <person name="White O."/>
            <person name="Salzberg S.L."/>
            <person name="Thomason B."/>
            <person name="Friedlander A.M."/>
            <person name="Koehler T.M."/>
            <person name="Hanna P.C."/>
            <person name="Kolstoe A.-B."/>
            <person name="Fraser C.M."/>
        </authorList>
    </citation>
    <scope>NUCLEOTIDE SEQUENCE [LARGE SCALE GENOMIC DNA]</scope>
    <source>
        <strain>Ames / isolate Porton</strain>
    </source>
</reference>
<reference key="2">
    <citation type="submission" date="2004-01" db="EMBL/GenBank/DDBJ databases">
        <title>Complete genome sequence of Bacillus anthracis Sterne.</title>
        <authorList>
            <person name="Brettin T.S."/>
            <person name="Bruce D."/>
            <person name="Challacombe J.F."/>
            <person name="Gilna P."/>
            <person name="Han C."/>
            <person name="Hill K."/>
            <person name="Hitchcock P."/>
            <person name="Jackson P."/>
            <person name="Keim P."/>
            <person name="Longmire J."/>
            <person name="Lucas S."/>
            <person name="Okinaka R."/>
            <person name="Richardson P."/>
            <person name="Rubin E."/>
            <person name="Tice H."/>
        </authorList>
    </citation>
    <scope>NUCLEOTIDE SEQUENCE [LARGE SCALE GENOMIC DNA]</scope>
    <source>
        <strain>Sterne</strain>
    </source>
</reference>
<reference key="3">
    <citation type="journal article" date="2009" name="J. Bacteriol.">
        <title>The complete genome sequence of Bacillus anthracis Ames 'Ancestor'.</title>
        <authorList>
            <person name="Ravel J."/>
            <person name="Jiang L."/>
            <person name="Stanley S.T."/>
            <person name="Wilson M.R."/>
            <person name="Decker R.S."/>
            <person name="Read T.D."/>
            <person name="Worsham P."/>
            <person name="Keim P.S."/>
            <person name="Salzberg S.L."/>
            <person name="Fraser-Liggett C.M."/>
            <person name="Rasko D.A."/>
        </authorList>
    </citation>
    <scope>NUCLEOTIDE SEQUENCE [LARGE SCALE GENOMIC DNA]</scope>
    <source>
        <strain>Ames ancestor</strain>
    </source>
</reference>
<evidence type="ECO:0000255" key="1">
    <source>
        <dbReference type="HAMAP-Rule" id="MF_01664"/>
    </source>
</evidence>
<gene>
    <name evidence="1" type="primary">ctaA</name>
    <name type="ordered locus">BA_4156</name>
    <name type="ordered locus">GBAA_4156</name>
    <name type="ordered locus">BAS3858</name>
</gene>
<accession>Q81MT7</accession>
<accession>Q6HU80</accession>
<accession>Q6KNG4</accession>
<organism>
    <name type="scientific">Bacillus anthracis</name>
    <dbReference type="NCBI Taxonomy" id="1392"/>
    <lineage>
        <taxon>Bacteria</taxon>
        <taxon>Bacillati</taxon>
        <taxon>Bacillota</taxon>
        <taxon>Bacilli</taxon>
        <taxon>Bacillales</taxon>
        <taxon>Bacillaceae</taxon>
        <taxon>Bacillus</taxon>
        <taxon>Bacillus cereus group</taxon>
    </lineage>
</organism>
<feature type="chain" id="PRO_0000348966" description="Heme A synthase">
    <location>
        <begin position="1"/>
        <end position="311"/>
    </location>
</feature>
<feature type="topological domain" description="Cytoplasmic" evidence="1">
    <location>
        <begin position="1"/>
        <end position="6"/>
    </location>
</feature>
<feature type="transmembrane region" description="Helical" evidence="1">
    <location>
        <begin position="7"/>
        <end position="27"/>
    </location>
</feature>
<feature type="topological domain" description="Extracellular" evidence="1">
    <location>
        <begin position="28"/>
        <end position="62"/>
    </location>
</feature>
<feature type="transmembrane region" description="Helical" evidence="1">
    <location>
        <begin position="63"/>
        <end position="83"/>
    </location>
</feature>
<feature type="topological domain" description="Cytoplasmic" evidence="1">
    <location>
        <begin position="84"/>
        <end position="91"/>
    </location>
</feature>
<feature type="transmembrane region" description="Helical" evidence="1">
    <location>
        <begin position="92"/>
        <end position="112"/>
    </location>
</feature>
<feature type="topological domain" description="Extracellular" evidence="1">
    <location>
        <begin position="113"/>
        <end position="121"/>
    </location>
</feature>
<feature type="transmembrane region" description="Helical" evidence="1">
    <location>
        <begin position="122"/>
        <end position="142"/>
    </location>
</feature>
<feature type="topological domain" description="Cytoplasmic" evidence="1">
    <location>
        <begin position="143"/>
        <end position="159"/>
    </location>
</feature>
<feature type="transmembrane region" description="Helical" evidence="1">
    <location>
        <begin position="160"/>
        <end position="180"/>
    </location>
</feature>
<feature type="topological domain" description="Extracellular" evidence="1">
    <location>
        <begin position="181"/>
        <end position="211"/>
    </location>
</feature>
<feature type="transmembrane region" description="Helical" evidence="1">
    <location>
        <begin position="212"/>
        <end position="232"/>
    </location>
</feature>
<feature type="topological domain" description="Cytoplasmic" evidence="1">
    <location>
        <begin position="233"/>
        <end position="243"/>
    </location>
</feature>
<feature type="transmembrane region" description="Helical" evidence="1">
    <location>
        <begin position="244"/>
        <end position="264"/>
    </location>
</feature>
<feature type="topological domain" description="Extracellular" evidence="1">
    <location>
        <begin position="265"/>
        <end position="271"/>
    </location>
</feature>
<feature type="transmembrane region" description="Helical" evidence="1">
    <location>
        <begin position="272"/>
        <end position="292"/>
    </location>
</feature>
<feature type="topological domain" description="Cytoplasmic" evidence="1">
    <location>
        <begin position="293"/>
        <end position="311"/>
    </location>
</feature>
<feature type="active site" evidence="1">
    <location>
        <position position="58"/>
    </location>
</feature>
<feature type="binding site" description="axial binding residue" evidence="1">
    <location>
        <position position="61"/>
    </location>
    <ligand>
        <name>heme o</name>
        <dbReference type="ChEBI" id="CHEBI:24480"/>
    </ligand>
    <ligandPart>
        <name>Fe</name>
        <dbReference type="ChEBI" id="CHEBI:18248"/>
    </ligandPart>
</feature>
<feature type="binding site" description="axial binding residue" evidence="1">
    <location>
        <position position="123"/>
    </location>
    <ligand>
        <name>heme o</name>
        <dbReference type="ChEBI" id="CHEBI:24480"/>
    </ligand>
    <ligandPart>
        <name>Fe</name>
        <dbReference type="ChEBI" id="CHEBI:18248"/>
    </ligandPart>
</feature>
<feature type="binding site" description="axial binding residue" evidence="1">
    <location>
        <position position="213"/>
    </location>
    <ligand>
        <name>heme b</name>
        <dbReference type="ChEBI" id="CHEBI:60344"/>
    </ligand>
    <ligandPart>
        <name>Fe</name>
        <dbReference type="ChEBI" id="CHEBI:18248"/>
    </ligandPart>
</feature>
<feature type="binding site" description="axial binding residue" evidence="1">
    <location>
        <position position="275"/>
    </location>
    <ligand>
        <name>heme b</name>
        <dbReference type="ChEBI" id="CHEBI:60344"/>
    </ligand>
    <ligandPart>
        <name>Fe</name>
        <dbReference type="ChEBI" id="CHEBI:18248"/>
    </ligandPart>
</feature>
<feature type="disulfide bond" description="Essential for catalytic activity" evidence="1">
    <location>
        <begin position="35"/>
        <end position="42"/>
    </location>
</feature>
<feature type="disulfide bond" evidence="1">
    <location>
        <begin position="189"/>
        <end position="195"/>
    </location>
</feature>
<proteinExistence type="inferred from homology"/>
<name>CTAA_BACAN</name>
<keyword id="KW-1003">Cell membrane</keyword>
<keyword id="KW-1015">Disulfide bond</keyword>
<keyword id="KW-0350">Heme biosynthesis</keyword>
<keyword id="KW-0408">Iron</keyword>
<keyword id="KW-0472">Membrane</keyword>
<keyword id="KW-0479">Metal-binding</keyword>
<keyword id="KW-0560">Oxidoreductase</keyword>
<keyword id="KW-1185">Reference proteome</keyword>
<keyword id="KW-0812">Transmembrane</keyword>
<keyword id="KW-1133">Transmembrane helix</keyword>
<comment type="function">
    <text evidence="1">Catalyzes the conversion of heme O to heme A by two successive hydroxylations of the methyl group at C8. The first hydroxylation forms heme I, the second hydroxylation results in an unstable dihydroxymethyl group, which spontaneously dehydrates, resulting in the formyl group of heme A.</text>
</comment>
<comment type="catalytic activity">
    <reaction evidence="1">
        <text>Fe(II)-heme o + 2 A + H2O = Fe(II)-heme a + 2 AH2</text>
        <dbReference type="Rhea" id="RHEA:63388"/>
        <dbReference type="ChEBI" id="CHEBI:13193"/>
        <dbReference type="ChEBI" id="CHEBI:15377"/>
        <dbReference type="ChEBI" id="CHEBI:17499"/>
        <dbReference type="ChEBI" id="CHEBI:60530"/>
        <dbReference type="ChEBI" id="CHEBI:61715"/>
        <dbReference type="EC" id="1.17.99.9"/>
    </reaction>
    <physiologicalReaction direction="left-to-right" evidence="1">
        <dbReference type="Rhea" id="RHEA:63389"/>
    </physiologicalReaction>
</comment>
<comment type="cofactor">
    <cofactor evidence="1">
        <name>heme b</name>
        <dbReference type="ChEBI" id="CHEBI:60344"/>
    </cofactor>
</comment>
<comment type="pathway">
    <text evidence="1">Porphyrin-containing compound metabolism; heme A biosynthesis; heme A from heme O: step 1/1.</text>
</comment>
<comment type="subunit">
    <text evidence="1">Interacts with CtaB.</text>
</comment>
<comment type="subcellular location">
    <subcellularLocation>
        <location evidence="1">Cell membrane</location>
        <topology evidence="1">Multi-pass membrane protein</topology>
    </subcellularLocation>
</comment>
<comment type="domain">
    <text evidence="1">The N-half (TM1-TM4) and C-half (TM5-TM8) domains are connected by an intracellular loop. Each domain is formed from four-helix bundles and they align in a pseudo twofold symmetry manner. The N-half domain is the substrate-heme O binding domain and the C-half domain is the cofactor heme B binding domain.</text>
</comment>
<comment type="domain">
    <text evidence="1">The cysteines of disulfide bond Cys-35 and Cys-42 may be involved in transfer of reducing equivalents from quinol in the membrane to the active site of the enzyme.</text>
</comment>
<comment type="similarity">
    <text evidence="1">Belongs to the COX15/CtaA family. Type 1 subfamily.</text>
</comment>
<protein>
    <recommendedName>
        <fullName evidence="1">Heme A synthase</fullName>
        <shortName evidence="1">HAS</shortName>
        <ecNumber evidence="1">1.17.99.9</ecNumber>
    </recommendedName>
    <alternativeName>
        <fullName evidence="1">Cytochrome aa3-controlling protein</fullName>
    </alternativeName>
</protein>
<dbReference type="EC" id="1.17.99.9" evidence="1"/>
<dbReference type="EMBL" id="AE016879">
    <property type="protein sequence ID" value="AAP27880.1"/>
    <property type="molecule type" value="Genomic_DNA"/>
</dbReference>
<dbReference type="EMBL" id="AE017334">
    <property type="protein sequence ID" value="AAT33278.1"/>
    <property type="molecule type" value="Genomic_DNA"/>
</dbReference>
<dbReference type="EMBL" id="AE017225">
    <property type="protein sequence ID" value="AAT56159.1"/>
    <property type="molecule type" value="Genomic_DNA"/>
</dbReference>
<dbReference type="RefSeq" id="NP_846394.1">
    <property type="nucleotide sequence ID" value="NC_003997.3"/>
</dbReference>
<dbReference type="RefSeq" id="WP_001188730.1">
    <property type="nucleotide sequence ID" value="NZ_WXXJ01000027.1"/>
</dbReference>
<dbReference type="RefSeq" id="YP_030108.1">
    <property type="nucleotide sequence ID" value="NC_005945.1"/>
</dbReference>
<dbReference type="SMR" id="Q81MT7"/>
<dbReference type="STRING" id="261594.GBAA_4156"/>
<dbReference type="DNASU" id="1088948"/>
<dbReference type="GeneID" id="45023833"/>
<dbReference type="KEGG" id="ban:BA_4156"/>
<dbReference type="KEGG" id="bar:GBAA_4156"/>
<dbReference type="KEGG" id="bat:BAS3858"/>
<dbReference type="PATRIC" id="fig|198094.11.peg.4127"/>
<dbReference type="eggNOG" id="COG1612">
    <property type="taxonomic scope" value="Bacteria"/>
</dbReference>
<dbReference type="HOGENOM" id="CLU_041525_3_1_9"/>
<dbReference type="OMA" id="SIIEWSH"/>
<dbReference type="OrthoDB" id="9816428at2"/>
<dbReference type="UniPathway" id="UPA00269">
    <property type="reaction ID" value="UER00713"/>
</dbReference>
<dbReference type="Proteomes" id="UP000000427">
    <property type="component" value="Chromosome"/>
</dbReference>
<dbReference type="Proteomes" id="UP000000594">
    <property type="component" value="Chromosome"/>
</dbReference>
<dbReference type="GO" id="GO:0005886">
    <property type="term" value="C:plasma membrane"/>
    <property type="evidence" value="ECO:0007669"/>
    <property type="project" value="UniProtKB-SubCell"/>
</dbReference>
<dbReference type="GO" id="GO:0046872">
    <property type="term" value="F:metal ion binding"/>
    <property type="evidence" value="ECO:0007669"/>
    <property type="project" value="UniProtKB-KW"/>
</dbReference>
<dbReference type="GO" id="GO:0016653">
    <property type="term" value="F:oxidoreductase activity, acting on NAD(P)H, heme protein as acceptor"/>
    <property type="evidence" value="ECO:0007669"/>
    <property type="project" value="InterPro"/>
</dbReference>
<dbReference type="GO" id="GO:0006784">
    <property type="term" value="P:heme A biosynthetic process"/>
    <property type="evidence" value="ECO:0007669"/>
    <property type="project" value="UniProtKB-UniRule"/>
</dbReference>
<dbReference type="HAMAP" id="MF_01664">
    <property type="entry name" value="HemeA_synth_type1"/>
    <property type="match status" value="1"/>
</dbReference>
<dbReference type="InterPro" id="IPR003780">
    <property type="entry name" value="COX15/CtaA_fam"/>
</dbReference>
<dbReference type="InterPro" id="IPR050450">
    <property type="entry name" value="COX15/CtaA_HemeA_synthase"/>
</dbReference>
<dbReference type="InterPro" id="IPR023755">
    <property type="entry name" value="HemeA_Synthase_type1"/>
</dbReference>
<dbReference type="PANTHER" id="PTHR35457">
    <property type="entry name" value="HEME A SYNTHASE"/>
    <property type="match status" value="1"/>
</dbReference>
<dbReference type="PANTHER" id="PTHR35457:SF1">
    <property type="entry name" value="HEME A SYNTHASE"/>
    <property type="match status" value="1"/>
</dbReference>
<dbReference type="Pfam" id="PF02628">
    <property type="entry name" value="COX15-CtaA"/>
    <property type="match status" value="1"/>
</dbReference>